<name>NADD_SHEWM</name>
<accession>B1KDW3</accession>
<proteinExistence type="inferred from homology"/>
<dbReference type="EC" id="2.7.7.18" evidence="1"/>
<dbReference type="EMBL" id="CP000961">
    <property type="protein sequence ID" value="ACA87965.1"/>
    <property type="molecule type" value="Genomic_DNA"/>
</dbReference>
<dbReference type="RefSeq" id="WP_012326297.1">
    <property type="nucleotide sequence ID" value="NC_010506.1"/>
</dbReference>
<dbReference type="SMR" id="B1KDW3"/>
<dbReference type="STRING" id="392500.Swoo_3705"/>
<dbReference type="KEGG" id="swd:Swoo_3705"/>
<dbReference type="eggNOG" id="COG1057">
    <property type="taxonomic scope" value="Bacteria"/>
</dbReference>
<dbReference type="HOGENOM" id="CLU_069765_0_0_6"/>
<dbReference type="UniPathway" id="UPA00253">
    <property type="reaction ID" value="UER00332"/>
</dbReference>
<dbReference type="Proteomes" id="UP000002168">
    <property type="component" value="Chromosome"/>
</dbReference>
<dbReference type="GO" id="GO:0005524">
    <property type="term" value="F:ATP binding"/>
    <property type="evidence" value="ECO:0007669"/>
    <property type="project" value="UniProtKB-KW"/>
</dbReference>
<dbReference type="GO" id="GO:0004515">
    <property type="term" value="F:nicotinate-nucleotide adenylyltransferase activity"/>
    <property type="evidence" value="ECO:0007669"/>
    <property type="project" value="UniProtKB-UniRule"/>
</dbReference>
<dbReference type="GO" id="GO:0009435">
    <property type="term" value="P:NAD biosynthetic process"/>
    <property type="evidence" value="ECO:0007669"/>
    <property type="project" value="UniProtKB-UniRule"/>
</dbReference>
<dbReference type="CDD" id="cd02165">
    <property type="entry name" value="NMNAT"/>
    <property type="match status" value="1"/>
</dbReference>
<dbReference type="Gene3D" id="3.40.50.620">
    <property type="entry name" value="HUPs"/>
    <property type="match status" value="1"/>
</dbReference>
<dbReference type="HAMAP" id="MF_00244">
    <property type="entry name" value="NaMN_adenylyltr"/>
    <property type="match status" value="1"/>
</dbReference>
<dbReference type="InterPro" id="IPR004821">
    <property type="entry name" value="Cyt_trans-like"/>
</dbReference>
<dbReference type="InterPro" id="IPR005248">
    <property type="entry name" value="NadD/NMNAT"/>
</dbReference>
<dbReference type="InterPro" id="IPR014729">
    <property type="entry name" value="Rossmann-like_a/b/a_fold"/>
</dbReference>
<dbReference type="NCBIfam" id="TIGR00125">
    <property type="entry name" value="cyt_tran_rel"/>
    <property type="match status" value="1"/>
</dbReference>
<dbReference type="NCBIfam" id="TIGR00482">
    <property type="entry name" value="nicotinate (nicotinamide) nucleotide adenylyltransferase"/>
    <property type="match status" value="1"/>
</dbReference>
<dbReference type="NCBIfam" id="NF000839">
    <property type="entry name" value="PRK00071.1-1"/>
    <property type="match status" value="1"/>
</dbReference>
<dbReference type="NCBIfam" id="NF000840">
    <property type="entry name" value="PRK00071.1-3"/>
    <property type="match status" value="1"/>
</dbReference>
<dbReference type="PANTHER" id="PTHR39321">
    <property type="entry name" value="NICOTINATE-NUCLEOTIDE ADENYLYLTRANSFERASE-RELATED"/>
    <property type="match status" value="1"/>
</dbReference>
<dbReference type="PANTHER" id="PTHR39321:SF3">
    <property type="entry name" value="PHOSPHOPANTETHEINE ADENYLYLTRANSFERASE"/>
    <property type="match status" value="1"/>
</dbReference>
<dbReference type="Pfam" id="PF01467">
    <property type="entry name" value="CTP_transf_like"/>
    <property type="match status" value="1"/>
</dbReference>
<dbReference type="SUPFAM" id="SSF52374">
    <property type="entry name" value="Nucleotidylyl transferase"/>
    <property type="match status" value="1"/>
</dbReference>
<sequence length="209" mass="23788">MRIGILGGTFDPIHFGHIRPAQEVKQTLNLDKVWLMPNHIPPHKTSTSVSTEQRLEMTQLVCDEYSEFELCAIEAKREAPSYLVTTLKQITNSHPNDEFFFIMGMDSLLSLDTWFEWQSLFGLCHIVVCQRPGWSLSPDSSIFSQYQSRVRSPNKITGKQSGLIIPIPVTPQAISSTHIREQLSEGITPTNALPDKIIQYIEDKNLYRT</sequence>
<comment type="function">
    <text evidence="1">Catalyzes the reversible adenylation of nicotinate mononucleotide (NaMN) to nicotinic acid adenine dinucleotide (NaAD).</text>
</comment>
<comment type="catalytic activity">
    <reaction evidence="1">
        <text>nicotinate beta-D-ribonucleotide + ATP + H(+) = deamido-NAD(+) + diphosphate</text>
        <dbReference type="Rhea" id="RHEA:22860"/>
        <dbReference type="ChEBI" id="CHEBI:15378"/>
        <dbReference type="ChEBI" id="CHEBI:30616"/>
        <dbReference type="ChEBI" id="CHEBI:33019"/>
        <dbReference type="ChEBI" id="CHEBI:57502"/>
        <dbReference type="ChEBI" id="CHEBI:58437"/>
        <dbReference type="EC" id="2.7.7.18"/>
    </reaction>
</comment>
<comment type="pathway">
    <text evidence="1">Cofactor biosynthesis; NAD(+) biosynthesis; deamido-NAD(+) from nicotinate D-ribonucleotide: step 1/1.</text>
</comment>
<comment type="similarity">
    <text evidence="1">Belongs to the NadD family.</text>
</comment>
<evidence type="ECO:0000255" key="1">
    <source>
        <dbReference type="HAMAP-Rule" id="MF_00244"/>
    </source>
</evidence>
<protein>
    <recommendedName>
        <fullName evidence="1">Probable nicotinate-nucleotide adenylyltransferase</fullName>
        <ecNumber evidence="1">2.7.7.18</ecNumber>
    </recommendedName>
    <alternativeName>
        <fullName evidence="1">Deamido-NAD(+) diphosphorylase</fullName>
    </alternativeName>
    <alternativeName>
        <fullName evidence="1">Deamido-NAD(+) pyrophosphorylase</fullName>
    </alternativeName>
    <alternativeName>
        <fullName evidence="1">Nicotinate mononucleotide adenylyltransferase</fullName>
        <shortName evidence="1">NaMN adenylyltransferase</shortName>
    </alternativeName>
</protein>
<feature type="chain" id="PRO_1000100794" description="Probable nicotinate-nucleotide adenylyltransferase">
    <location>
        <begin position="1"/>
        <end position="209"/>
    </location>
</feature>
<keyword id="KW-0067">ATP-binding</keyword>
<keyword id="KW-0520">NAD</keyword>
<keyword id="KW-0547">Nucleotide-binding</keyword>
<keyword id="KW-0548">Nucleotidyltransferase</keyword>
<keyword id="KW-0662">Pyridine nucleotide biosynthesis</keyword>
<keyword id="KW-1185">Reference proteome</keyword>
<keyword id="KW-0808">Transferase</keyword>
<organism>
    <name type="scientific">Shewanella woodyi (strain ATCC 51908 / MS32)</name>
    <dbReference type="NCBI Taxonomy" id="392500"/>
    <lineage>
        <taxon>Bacteria</taxon>
        <taxon>Pseudomonadati</taxon>
        <taxon>Pseudomonadota</taxon>
        <taxon>Gammaproteobacteria</taxon>
        <taxon>Alteromonadales</taxon>
        <taxon>Shewanellaceae</taxon>
        <taxon>Shewanella</taxon>
    </lineage>
</organism>
<reference key="1">
    <citation type="submission" date="2008-02" db="EMBL/GenBank/DDBJ databases">
        <title>Complete sequence of Shewanella woodyi ATCC 51908.</title>
        <authorList>
            <consortium name="US DOE Joint Genome Institute"/>
            <person name="Copeland A."/>
            <person name="Lucas S."/>
            <person name="Lapidus A."/>
            <person name="Glavina del Rio T."/>
            <person name="Dalin E."/>
            <person name="Tice H."/>
            <person name="Bruce D."/>
            <person name="Goodwin L."/>
            <person name="Pitluck S."/>
            <person name="Sims D."/>
            <person name="Brettin T."/>
            <person name="Detter J.C."/>
            <person name="Han C."/>
            <person name="Kuske C.R."/>
            <person name="Schmutz J."/>
            <person name="Larimer F."/>
            <person name="Land M."/>
            <person name="Hauser L."/>
            <person name="Kyrpides N."/>
            <person name="Lykidis A."/>
            <person name="Zhao J.-S."/>
            <person name="Richardson P."/>
        </authorList>
    </citation>
    <scope>NUCLEOTIDE SEQUENCE [LARGE SCALE GENOMIC DNA]</scope>
    <source>
        <strain>ATCC 51908 / MS32</strain>
    </source>
</reference>
<gene>
    <name evidence="1" type="primary">nadD</name>
    <name type="ordered locus">Swoo_3705</name>
</gene>